<name>EF1A2_HUMAN</name>
<proteinExistence type="evidence at protein level"/>
<organism>
    <name type="scientific">Homo sapiens</name>
    <name type="common">Human</name>
    <dbReference type="NCBI Taxonomy" id="9606"/>
    <lineage>
        <taxon>Eukaryota</taxon>
        <taxon>Metazoa</taxon>
        <taxon>Chordata</taxon>
        <taxon>Craniata</taxon>
        <taxon>Vertebrata</taxon>
        <taxon>Euteleostomi</taxon>
        <taxon>Mammalia</taxon>
        <taxon>Eutheria</taxon>
        <taxon>Euarchontoglires</taxon>
        <taxon>Primates</taxon>
        <taxon>Haplorrhini</taxon>
        <taxon>Catarrhini</taxon>
        <taxon>Hominidae</taxon>
        <taxon>Homo</taxon>
    </lineage>
</organism>
<gene>
    <name evidence="17 20" type="primary">EEF1A2</name>
    <name type="synonym">EEF1AL</name>
    <name type="synonym">STN</name>
</gene>
<reference key="1">
    <citation type="journal article" date="1993" name="Eur. J. Biochem.">
        <title>Tissue-dependent variation in the expression of elongation factor-1 alpha isoforms: isolation and characterisation of a cDNA encoding a novel variant of human elongation-factor 1 alpha.</title>
        <authorList>
            <person name="Knudsen S.M."/>
            <person name="Frydenberg J."/>
            <person name="Clark B.F.C."/>
            <person name="Leffers H."/>
        </authorList>
    </citation>
    <scope>NUCLEOTIDE SEQUENCE [MRNA]</scope>
    <scope>TISSUE SPECIFICITY</scope>
</reference>
<reference key="2">
    <citation type="journal article" date="2000" name="Genomics">
        <title>The human elongation factor 1 A-2 gene (EEF1A2): complete sequence and characterization of gene structure and promoter activity.</title>
        <authorList>
            <person name="Bischoff C."/>
            <person name="Kahns S."/>
            <person name="Lund A."/>
            <person name="Joergensen H.F."/>
            <person name="Praestegaard M."/>
            <person name="Clark B.F.C."/>
            <person name="Leffers H."/>
        </authorList>
    </citation>
    <scope>NUCLEOTIDE SEQUENCE [GENOMIC DNA]</scope>
</reference>
<reference key="3">
    <citation type="journal article" date="2008" name="Nat. Methods">
        <title>Human protein factory for converting the transcriptome into an in vitro-expressed proteome.</title>
        <authorList>
            <person name="Goshima N."/>
            <person name="Kawamura Y."/>
            <person name="Fukumoto A."/>
            <person name="Miura A."/>
            <person name="Honma R."/>
            <person name="Satoh R."/>
            <person name="Wakamatsu A."/>
            <person name="Yamamoto J."/>
            <person name="Kimura K."/>
            <person name="Nishikawa T."/>
            <person name="Andoh T."/>
            <person name="Iida Y."/>
            <person name="Ishikawa K."/>
            <person name="Ito E."/>
            <person name="Kagawa N."/>
            <person name="Kaminaga C."/>
            <person name="Kanehori K."/>
            <person name="Kawakami B."/>
            <person name="Kenmochi K."/>
            <person name="Kimura R."/>
            <person name="Kobayashi M."/>
            <person name="Kuroita T."/>
            <person name="Kuwayama H."/>
            <person name="Maruyama Y."/>
            <person name="Matsuo K."/>
            <person name="Minami K."/>
            <person name="Mitsubori M."/>
            <person name="Mori M."/>
            <person name="Morishita R."/>
            <person name="Murase A."/>
            <person name="Nishikawa A."/>
            <person name="Nishikawa S."/>
            <person name="Okamoto T."/>
            <person name="Sakagami N."/>
            <person name="Sakamoto Y."/>
            <person name="Sasaki Y."/>
            <person name="Seki T."/>
            <person name="Sono S."/>
            <person name="Sugiyama A."/>
            <person name="Sumiya T."/>
            <person name="Takayama T."/>
            <person name="Takayama Y."/>
            <person name="Takeda H."/>
            <person name="Togashi T."/>
            <person name="Yahata K."/>
            <person name="Yamada H."/>
            <person name="Yanagisawa Y."/>
            <person name="Endo Y."/>
            <person name="Imamoto F."/>
            <person name="Kisu Y."/>
            <person name="Tanaka S."/>
            <person name="Isogai T."/>
            <person name="Imai J."/>
            <person name="Watanabe S."/>
            <person name="Nomura N."/>
        </authorList>
    </citation>
    <scope>NUCLEOTIDE SEQUENCE [LARGE SCALE MRNA]</scope>
</reference>
<reference key="4">
    <citation type="journal article" date="2001" name="Nature">
        <title>The DNA sequence and comparative analysis of human chromosome 20.</title>
        <authorList>
            <person name="Deloukas P."/>
            <person name="Matthews L.H."/>
            <person name="Ashurst J.L."/>
            <person name="Burton J."/>
            <person name="Gilbert J.G.R."/>
            <person name="Jones M."/>
            <person name="Stavrides G."/>
            <person name="Almeida J.P."/>
            <person name="Babbage A.K."/>
            <person name="Bagguley C.L."/>
            <person name="Bailey J."/>
            <person name="Barlow K.F."/>
            <person name="Bates K.N."/>
            <person name="Beard L.M."/>
            <person name="Beare D.M."/>
            <person name="Beasley O.P."/>
            <person name="Bird C.P."/>
            <person name="Blakey S.E."/>
            <person name="Bridgeman A.M."/>
            <person name="Brown A.J."/>
            <person name="Buck D."/>
            <person name="Burrill W.D."/>
            <person name="Butler A.P."/>
            <person name="Carder C."/>
            <person name="Carter N.P."/>
            <person name="Chapman J.C."/>
            <person name="Clamp M."/>
            <person name="Clark G."/>
            <person name="Clark L.N."/>
            <person name="Clark S.Y."/>
            <person name="Clee C.M."/>
            <person name="Clegg S."/>
            <person name="Cobley V.E."/>
            <person name="Collier R.E."/>
            <person name="Connor R.E."/>
            <person name="Corby N.R."/>
            <person name="Coulson A."/>
            <person name="Coville G.J."/>
            <person name="Deadman R."/>
            <person name="Dhami P.D."/>
            <person name="Dunn M."/>
            <person name="Ellington A.G."/>
            <person name="Frankland J.A."/>
            <person name="Fraser A."/>
            <person name="French L."/>
            <person name="Garner P."/>
            <person name="Grafham D.V."/>
            <person name="Griffiths C."/>
            <person name="Griffiths M.N.D."/>
            <person name="Gwilliam R."/>
            <person name="Hall R.E."/>
            <person name="Hammond S."/>
            <person name="Harley J.L."/>
            <person name="Heath P.D."/>
            <person name="Ho S."/>
            <person name="Holden J.L."/>
            <person name="Howden P.J."/>
            <person name="Huckle E."/>
            <person name="Hunt A.R."/>
            <person name="Hunt S.E."/>
            <person name="Jekosch K."/>
            <person name="Johnson C.M."/>
            <person name="Johnson D."/>
            <person name="Kay M.P."/>
            <person name="Kimberley A.M."/>
            <person name="King A."/>
            <person name="Knights A."/>
            <person name="Laird G.K."/>
            <person name="Lawlor S."/>
            <person name="Lehvaeslaiho M.H."/>
            <person name="Leversha M.A."/>
            <person name="Lloyd C."/>
            <person name="Lloyd D.M."/>
            <person name="Lovell J.D."/>
            <person name="Marsh V.L."/>
            <person name="Martin S.L."/>
            <person name="McConnachie L.J."/>
            <person name="McLay K."/>
            <person name="McMurray A.A."/>
            <person name="Milne S.A."/>
            <person name="Mistry D."/>
            <person name="Moore M.J.F."/>
            <person name="Mullikin J.C."/>
            <person name="Nickerson T."/>
            <person name="Oliver K."/>
            <person name="Parker A."/>
            <person name="Patel R."/>
            <person name="Pearce T.A.V."/>
            <person name="Peck A.I."/>
            <person name="Phillimore B.J.C.T."/>
            <person name="Prathalingam S.R."/>
            <person name="Plumb R.W."/>
            <person name="Ramsay H."/>
            <person name="Rice C.M."/>
            <person name="Ross M.T."/>
            <person name="Scott C.E."/>
            <person name="Sehra H.K."/>
            <person name="Shownkeen R."/>
            <person name="Sims S."/>
            <person name="Skuce C.D."/>
            <person name="Smith M.L."/>
            <person name="Soderlund C."/>
            <person name="Steward C.A."/>
            <person name="Sulston J.E."/>
            <person name="Swann R.M."/>
            <person name="Sycamore N."/>
            <person name="Taylor R."/>
            <person name="Tee L."/>
            <person name="Thomas D.W."/>
            <person name="Thorpe A."/>
            <person name="Tracey A."/>
            <person name="Tromans A.C."/>
            <person name="Vaudin M."/>
            <person name="Wall M."/>
            <person name="Wallis J.M."/>
            <person name="Whitehead S.L."/>
            <person name="Whittaker P."/>
            <person name="Willey D.L."/>
            <person name="Williams L."/>
            <person name="Williams S.A."/>
            <person name="Wilming L."/>
            <person name="Wray P.W."/>
            <person name="Hubbard T."/>
            <person name="Durbin R.M."/>
            <person name="Bentley D.R."/>
            <person name="Beck S."/>
            <person name="Rogers J."/>
        </authorList>
    </citation>
    <scope>NUCLEOTIDE SEQUENCE [LARGE SCALE GENOMIC DNA]</scope>
</reference>
<reference key="5">
    <citation type="submission" date="2005-09" db="EMBL/GenBank/DDBJ databases">
        <authorList>
            <person name="Mural R.J."/>
            <person name="Istrail S."/>
            <person name="Sutton G.G."/>
            <person name="Florea L."/>
            <person name="Halpern A.L."/>
            <person name="Mobarry C.M."/>
            <person name="Lippert R."/>
            <person name="Walenz B."/>
            <person name="Shatkay H."/>
            <person name="Dew I."/>
            <person name="Miller J.R."/>
            <person name="Flanigan M.J."/>
            <person name="Edwards N.J."/>
            <person name="Bolanos R."/>
            <person name="Fasulo D."/>
            <person name="Halldorsson B.V."/>
            <person name="Hannenhalli S."/>
            <person name="Turner R."/>
            <person name="Yooseph S."/>
            <person name="Lu F."/>
            <person name="Nusskern D.R."/>
            <person name="Shue B.C."/>
            <person name="Zheng X.H."/>
            <person name="Zhong F."/>
            <person name="Delcher A.L."/>
            <person name="Huson D.H."/>
            <person name="Kravitz S.A."/>
            <person name="Mouchard L."/>
            <person name="Reinert K."/>
            <person name="Remington K.A."/>
            <person name="Clark A.G."/>
            <person name="Waterman M.S."/>
            <person name="Eichler E.E."/>
            <person name="Adams M.D."/>
            <person name="Hunkapiller M.W."/>
            <person name="Myers E.W."/>
            <person name="Venter J.C."/>
        </authorList>
    </citation>
    <scope>NUCLEOTIDE SEQUENCE [LARGE SCALE GENOMIC DNA]</scope>
</reference>
<reference key="6">
    <citation type="journal article" date="2004" name="Genome Res.">
        <title>The status, quality, and expansion of the NIH full-length cDNA project: the Mammalian Gene Collection (MGC).</title>
        <authorList>
            <consortium name="The MGC Project Team"/>
        </authorList>
    </citation>
    <scope>NUCLEOTIDE SEQUENCE [LARGE SCALE MRNA]</scope>
    <source>
        <tissue>Duodenum</tissue>
        <tissue>Lung</tissue>
    </source>
</reference>
<reference key="7">
    <citation type="journal article" date="1994" name="Biochem. Biophys. Res. Commun.">
        <title>Cloning of human and mouse brain cDNAs coding for S1, the second member of the mammalian elongation factor-1 alpha gene family: analysis of a possible evolutionary pathway.</title>
        <authorList>
            <person name="Lee S."/>
            <person name="Ann D.K."/>
            <person name="Wang E."/>
        </authorList>
    </citation>
    <scope>NUCLEOTIDE SEQUENCE [MRNA] OF 29-463</scope>
    <source>
        <tissue>Hippocampus</tissue>
    </source>
</reference>
<reference key="8">
    <citation type="journal article" date="2009" name="Science">
        <title>Lysine acetylation targets protein complexes and co-regulates major cellular functions.</title>
        <authorList>
            <person name="Choudhary C."/>
            <person name="Kumar C."/>
            <person name="Gnad F."/>
            <person name="Nielsen M.L."/>
            <person name="Rehman M."/>
            <person name="Walther T.C."/>
            <person name="Olsen J.V."/>
            <person name="Mann M."/>
        </authorList>
    </citation>
    <scope>ACETYLATION [LARGE SCALE ANALYSIS] AT LYS-179 AND LYS-439</scope>
    <scope>IDENTIFICATION BY MASS SPECTROMETRY [LARGE SCALE ANALYSIS]</scope>
</reference>
<reference key="9">
    <citation type="journal article" date="2010" name="FASEB J.">
        <title>Targeting of eEF1A with Amaryllidaceae isocarbostyrils as a strategy to combat melanomas.</title>
        <authorList>
            <person name="Van Goietsenoven G."/>
            <person name="Hutton J."/>
            <person name="Becker J.P."/>
            <person name="Lallemand B."/>
            <person name="Robert F."/>
            <person name="Lefranc F."/>
            <person name="Pirker C."/>
            <person name="Vandenbussche G."/>
            <person name="Van Antwerpen P."/>
            <person name="Evidente A."/>
            <person name="Berger W."/>
            <person name="Prevost M."/>
            <person name="Pelletier J."/>
            <person name="Kiss R."/>
            <person name="Kinzy T.G."/>
            <person name="Kornienko A."/>
            <person name="Mathieu V."/>
        </authorList>
    </citation>
    <scope>ACTIVITY REGULATION</scope>
</reference>
<reference key="10">
    <citation type="journal article" date="2015" name="FASEB J.">
        <authorList>
            <person name="Van Goietsenoven G."/>
            <person name="Hutton J."/>
            <person name="Becker J.P."/>
            <person name="Lallemand B."/>
            <person name="Robert F."/>
            <person name="Lefranc F."/>
            <person name="Pirker C."/>
            <person name="Vandenbussche G."/>
            <person name="Van Antwerpen P."/>
            <person name="Evidente A."/>
            <person name="Berger W."/>
            <person name="Prevost M."/>
            <person name="Pelletier J."/>
            <person name="Kiss R."/>
            <person name="Kinzy T.G."/>
            <person name="Kornienko A."/>
            <person name="Mathieu V."/>
        </authorList>
    </citation>
    <scope>ERRATUM OF PUBMED:20643906</scope>
</reference>
<reference key="11">
    <citation type="journal article" date="2011" name="BMC Syst. Biol.">
        <title>Initial characterization of the human central proteome.</title>
        <authorList>
            <person name="Burkard T.R."/>
            <person name="Planyavsky M."/>
            <person name="Kaupe I."/>
            <person name="Breitwieser F.P."/>
            <person name="Buerckstuemmer T."/>
            <person name="Bennett K.L."/>
            <person name="Superti-Furga G."/>
            <person name="Colinge J."/>
        </authorList>
    </citation>
    <scope>IDENTIFICATION BY MASS SPECTROMETRY [LARGE SCALE ANALYSIS]</scope>
</reference>
<reference key="12">
    <citation type="journal article" date="2014" name="Mol. Cell. Proteomics">
        <title>Immunoaffinity enrichment and mass spectrometry analysis of protein methylation.</title>
        <authorList>
            <person name="Guo A."/>
            <person name="Gu H."/>
            <person name="Zhou J."/>
            <person name="Mulhern D."/>
            <person name="Wang Y."/>
            <person name="Lee K.A."/>
            <person name="Yang V."/>
            <person name="Aguiar M."/>
            <person name="Kornhauser J."/>
            <person name="Jia X."/>
            <person name="Ren J."/>
            <person name="Beausoleil S.A."/>
            <person name="Silva J.C."/>
            <person name="Vemulapalli V."/>
            <person name="Bedford M.T."/>
            <person name="Comb M.J."/>
        </authorList>
    </citation>
    <scope>METHYLATION [LARGE SCALE ANALYSIS] AT LYS-79 AND LYS-165</scope>
    <scope>IDENTIFICATION BY MASS SPECTROMETRY [LARGE SCALE ANALYSIS]</scope>
    <source>
        <tissue>Colon carcinoma</tissue>
    </source>
</reference>
<reference key="13">
    <citation type="journal article" date="2017" name="Nucleic Acids Res.">
        <title>The novel lysine specific methyltransferase METTL21B affects mRNA translation through inducible and dynamic methylation of Lys-165 in human eukaryotic elongation factor 1 alpha (eEF1A).</title>
        <authorList>
            <person name="Malecki J."/>
            <person name="Aileni V.K."/>
            <person name="Ho A.Y."/>
            <person name="Schwarz J."/>
            <person name="Moen A."/>
            <person name="Soerensen V."/>
            <person name="Nilges B.S."/>
            <person name="Jakobsson M.E."/>
            <person name="Leidel S.A."/>
            <person name="Falnes P.O."/>
        </authorList>
    </citation>
    <scope>METHYLATION AT LYS-165</scope>
    <scope>MUTAGENESIS OF LYS-165</scope>
</reference>
<reference key="14">
    <citation type="journal article" date="2017" name="Nucleic Acids Res.">
        <title>Methylation of human eukaryotic elongation factor alpha (eEF1A) by a member of a novel protein lysine methyltransferase family modulates mRNA translation.</title>
        <authorList>
            <person name="Jakobsson M.E."/>
            <person name="Malecki J."/>
            <person name="Nilges B.S."/>
            <person name="Moen A."/>
            <person name="Leidel S.A."/>
            <person name="Falnes P.O."/>
        </authorList>
    </citation>
    <scope>METHYLATION AT LYS-36</scope>
    <scope>IDENTIFICATION BY MASS SPECTROMETRY</scope>
    <scope>MUTAGENESIS OF LYS-36</scope>
</reference>
<reference key="15">
    <citation type="journal article" date="2018" name="Cell">
        <title>METTL13 methylation of eEF1A increases translational output to promote tumorigenesis.</title>
        <authorList>
            <person name="Liu S."/>
            <person name="Hausmann S."/>
            <person name="Carlson S.M."/>
            <person name="Fuentes M.E."/>
            <person name="Francis J.W."/>
            <person name="Pillai R."/>
            <person name="Lofgren S.M."/>
            <person name="Hulea L."/>
            <person name="Tandoc K."/>
            <person name="Lu J."/>
            <person name="Li A."/>
            <person name="Nguyen N.D."/>
            <person name="Caporicci M."/>
            <person name="Kim M.P."/>
            <person name="Maitra A."/>
            <person name="Wang H."/>
            <person name="Wistuba I.I."/>
            <person name="Porco J.A. Jr."/>
            <person name="Bassik M.C."/>
            <person name="Elias J.E."/>
            <person name="Song J."/>
            <person name="Topisirovic I."/>
            <person name="Van Rechem C."/>
            <person name="Mazur P.K."/>
            <person name="Gozani O."/>
        </authorList>
    </citation>
    <scope>METHYLATION AT LYS-55 BY METTL13</scope>
</reference>
<reference key="16">
    <citation type="journal article" date="2018" name="Nat. Commun.">
        <title>The dual methyltransferase METTL13 targets N terminus and Lys55 of eEF1A and modulates codon-specific translation rates.</title>
        <authorList>
            <person name="Jakobsson M.E."/>
            <person name="Malecki J.M."/>
            <person name="Halabelian L."/>
            <person name="Nilges B.S."/>
            <person name="Pinto R."/>
            <person name="Kudithipudi S."/>
            <person name="Munk S."/>
            <person name="Davydova E."/>
            <person name="Zuhairi F.R."/>
            <person name="Arrowsmith C.H."/>
            <person name="Jeltsch A."/>
            <person name="Leidel S.A."/>
            <person name="Olsen J.V."/>
            <person name="Falnes P.O."/>
        </authorList>
    </citation>
    <scope>METHYLATION AT N-TERMINUS AND AT LYS-55 BY METTL13</scope>
</reference>
<reference key="17">
    <citation type="journal article" date="2008" name="Proc. Natl. Acad. Sci. U.S.A.">
        <title>The structure of HLA-DR52c: comparison to other HLA-DRB3 alleles.</title>
        <authorList>
            <person name="Dai S."/>
            <person name="Crawford F."/>
            <person name="Marrack P."/>
            <person name="Kappler J.W."/>
        </authorList>
    </citation>
    <scope>X-RAY CRYSTALLOGRAPHY (1.8 ANGSTROMS) OF 343-355 IN COMPLEX WITH HLA-DRA/HLA-DRB3 HETERODIMER</scope>
</reference>
<reference evidence="21" key="18">
    <citation type="journal article" date="2023" name="Nature">
        <title>Visualization of translation and protein biogenesis at the ER membrane.</title>
        <authorList>
            <person name="Gemmer M."/>
            <person name="Chaillet M.L."/>
            <person name="van Loenhout J."/>
            <person name="Cuevas Arenas R."/>
            <person name="Vismpas D."/>
            <person name="Grollers-Mulderij M."/>
            <person name="Koh F.A."/>
            <person name="Albanese P."/>
            <person name="Scheltema R.A."/>
            <person name="Howes S.C."/>
            <person name="Kotecha A."/>
            <person name="Fedry J."/>
            <person name="Forster F."/>
        </authorList>
    </citation>
    <scope>STRUCTURE BY ELECTRON MICROSCOPY (2.90 ANGSTROMS)</scope>
    <scope>SUBCELLULAR LOCATION</scope>
</reference>
<reference key="19">
    <citation type="journal article" date="2012" name="N. Engl. J. Med.">
        <title>Diagnostic exome sequencing in persons with severe intellectual disability.</title>
        <authorList>
            <person name="de Ligt J."/>
            <person name="Willemsen M.H."/>
            <person name="van Bon B.W."/>
            <person name="Kleefstra T."/>
            <person name="Yntema H.G."/>
            <person name="Kroes T."/>
            <person name="Vulto-van Silfhout A.T."/>
            <person name="Koolen D.A."/>
            <person name="de Vries P."/>
            <person name="Gilissen C."/>
            <person name="del Rosario M."/>
            <person name="Hoischen A."/>
            <person name="Scheffer H."/>
            <person name="de Vries B.B."/>
            <person name="Brunner H.G."/>
            <person name="Veltman J.A."/>
            <person name="Vissers L.E."/>
        </authorList>
    </citation>
    <scope>INVOLVEMENT IN DEE33</scope>
    <scope>VARIANT DEE33 SER-70</scope>
</reference>
<reference key="20">
    <citation type="journal article" date="2013" name="Epilepsia">
        <title>Exome sequencing reveals new causal mutations in children with epileptic encephalopathies.</title>
        <authorList>
            <person name="Veeramah K.R."/>
            <person name="Johnstone L."/>
            <person name="Karafet T.M."/>
            <person name="Wolf D."/>
            <person name="Sprissler R."/>
            <person name="Salogiannis J."/>
            <person name="Barth-Maron A."/>
            <person name="Greenberg M.E."/>
            <person name="Stuhlmann T."/>
            <person name="Weinert S."/>
            <person name="Jentsch T.J."/>
            <person name="Pazzi M."/>
            <person name="Restifo L.L."/>
            <person name="Talwar D."/>
            <person name="Erickson R.P."/>
            <person name="Hammer M.F."/>
        </authorList>
    </citation>
    <scope>INVOLVEMENT IN DEE33</scope>
    <scope>VARIANT DEE33 SER-70</scope>
</reference>
<reference key="21">
    <citation type="journal article" date="2015" name="Clin. Genet.">
        <title>De novo EEF1A2 mutations in patients with characteristic facial features, intellectual disability, autistic behaviors and epilepsy.</title>
        <authorList>
            <person name="Nakajima J."/>
            <person name="Okamoto N."/>
            <person name="Tohyama J."/>
            <person name="Kato M."/>
            <person name="Arai H."/>
            <person name="Funahashi O."/>
            <person name="Tsurusaki Y."/>
            <person name="Nakashima M."/>
            <person name="Kawashima H."/>
            <person name="Saitsu H."/>
            <person name="Matsumoto N."/>
            <person name="Miyake N."/>
        </authorList>
    </citation>
    <scope>INVOLVEMENT IN MRD38</scope>
    <scope>VARIANTS MRD38 LYS-122 AND HIS-252</scope>
</reference>
<reference key="22">
    <citation type="journal article" date="2016" name="J. Med. Genet.">
        <title>Identification of novel genetic causes of Rett syndrome-like phenotypes.</title>
        <authorList>
            <person name="Lopes F."/>
            <person name="Barbosa M."/>
            <person name="Ameur A."/>
            <person name="Soares G."/>
            <person name="de Sa J."/>
            <person name="Dias A.I."/>
            <person name="Oliveira G."/>
            <person name="Cabral P."/>
            <person name="Temudo T."/>
            <person name="Calado E."/>
            <person name="Cruz I.F."/>
            <person name="Vieira J.P."/>
            <person name="Oliveira R."/>
            <person name="Esteves S."/>
            <person name="Sauer S."/>
            <person name="Jonasson I."/>
            <person name="Syvaenen A.C."/>
            <person name="Gyllensten U."/>
            <person name="Pinto D."/>
            <person name="Maciel P."/>
        </authorList>
    </citation>
    <scope>VARIANT THR-92</scope>
</reference>
<sequence length="463" mass="50470">MGKEKTHINIVVIGHVDSGKSTTTGHLIYKCGGIDKRTIEKFEKEAAEMGKGSFKYAWVLDKLKAERERGITIDISLWKFETTKYYITIIDAPGHRDFIKNMITGTSQADCAVLIVAAGVGEFEAGISKNGQTREHALLAYTLGVKQLIVGVNKMDSTEPAYSEKRYDEIVKEVSAYIKKIGYNPATVPFVPISGWHGDNMLEPSPNMPWFKGWKVERKEGNASGVSLLEALDTILPPTRPTDKPLRLPLQDVYKIGGIGTVPVGRVETGILRPGMVVTFAPVNITTEVKSVEMHHEALSEALPGDNVGFNVKNVSVKDIRRGNVCGDSKSDPPQEAAQFTSQVIILNHPGQISAGYSPVIDCHTAHIACKFAELKEKIDRRSGKKLEDNPKSLKSGDAAIVEMVPGKPMCVESFSQYPPLGRFAVRDMRQTVAVGVIKNVEKKSGGAGKVTKSAQKAQKAGK</sequence>
<dbReference type="EC" id="3.6.5.-" evidence="4"/>
<dbReference type="EMBL" id="X70940">
    <property type="protein sequence ID" value="CAA50280.1"/>
    <property type="molecule type" value="mRNA"/>
</dbReference>
<dbReference type="EMBL" id="AF163763">
    <property type="protein sequence ID" value="AAF80488.1"/>
    <property type="molecule type" value="Genomic_DNA"/>
</dbReference>
<dbReference type="EMBL" id="AB451389">
    <property type="protein sequence ID" value="BAG70203.1"/>
    <property type="molecule type" value="mRNA"/>
</dbReference>
<dbReference type="EMBL" id="AL121829">
    <property type="status" value="NOT_ANNOTATED_CDS"/>
    <property type="molecule type" value="Genomic_DNA"/>
</dbReference>
<dbReference type="EMBL" id="CH471077">
    <property type="protein sequence ID" value="EAW75260.1"/>
    <property type="molecule type" value="Genomic_DNA"/>
</dbReference>
<dbReference type="EMBL" id="BC000432">
    <property type="protein sequence ID" value="AAH00432.1"/>
    <property type="molecule type" value="mRNA"/>
</dbReference>
<dbReference type="EMBL" id="BC110409">
    <property type="protein sequence ID" value="AAI10410.1"/>
    <property type="molecule type" value="mRNA"/>
</dbReference>
<dbReference type="EMBL" id="L10340">
    <property type="protein sequence ID" value="AAA91835.1"/>
    <property type="molecule type" value="mRNA"/>
</dbReference>
<dbReference type="CCDS" id="CCDS13522.1"/>
<dbReference type="PIR" id="S35033">
    <property type="entry name" value="EFHUA2"/>
</dbReference>
<dbReference type="RefSeq" id="NP_001949.1">
    <property type="nucleotide sequence ID" value="NM_001958.5"/>
</dbReference>
<dbReference type="PDB" id="3C5J">
    <property type="method" value="X-ray"/>
    <property type="resolution" value="1.80 A"/>
    <property type="chains" value="C=343-355"/>
</dbReference>
<dbReference type="PDB" id="8B6Z">
    <property type="method" value="EM"/>
    <property type="resolution" value="2.90 A"/>
    <property type="chains" value="A=1-463"/>
</dbReference>
<dbReference type="PDBsum" id="3C5J"/>
<dbReference type="PDBsum" id="8B6Z"/>
<dbReference type="EMDB" id="EMD-15893"/>
<dbReference type="SMR" id="Q05639"/>
<dbReference type="BioGRID" id="108238">
    <property type="interactions" value="309"/>
</dbReference>
<dbReference type="DIP" id="DIP-40060N"/>
<dbReference type="FunCoup" id="Q05639">
    <property type="interactions" value="1339"/>
</dbReference>
<dbReference type="IntAct" id="Q05639">
    <property type="interactions" value="169"/>
</dbReference>
<dbReference type="MINT" id="Q05639"/>
<dbReference type="STRING" id="9606.ENSP00000217182"/>
<dbReference type="BindingDB" id="Q05639"/>
<dbReference type="ChEMBL" id="CHEMBL1795122"/>
<dbReference type="DrugBank" id="DB04977">
    <property type="generic name" value="Plitidepsin"/>
</dbReference>
<dbReference type="GlyGen" id="Q05639">
    <property type="glycosylation" value="2 sites, 1 O-linked glycan (2 sites)"/>
</dbReference>
<dbReference type="iPTMnet" id="Q05639"/>
<dbReference type="MetOSite" id="Q05639"/>
<dbReference type="PhosphoSitePlus" id="Q05639"/>
<dbReference type="SwissPalm" id="Q05639"/>
<dbReference type="BioMuta" id="EEF1A2"/>
<dbReference type="DMDM" id="544231"/>
<dbReference type="jPOST" id="Q05639"/>
<dbReference type="MassIVE" id="Q05639"/>
<dbReference type="PaxDb" id="9606-ENSP00000217182"/>
<dbReference type="PeptideAtlas" id="Q05639"/>
<dbReference type="PRIDE" id="Q05639"/>
<dbReference type="ProteomicsDB" id="58341"/>
<dbReference type="Pumba" id="Q05639"/>
<dbReference type="TopDownProteomics" id="Q05639"/>
<dbReference type="Antibodypedia" id="29757">
    <property type="antibodies" value="254 antibodies from 37 providers"/>
</dbReference>
<dbReference type="DNASU" id="1917"/>
<dbReference type="Ensembl" id="ENST00000217182.6">
    <property type="protein sequence ID" value="ENSP00000217182.3"/>
    <property type="gene ID" value="ENSG00000101210.14"/>
</dbReference>
<dbReference type="GeneID" id="1917"/>
<dbReference type="KEGG" id="hsa:1917"/>
<dbReference type="MANE-Select" id="ENST00000217182.6">
    <property type="protein sequence ID" value="ENSP00000217182.3"/>
    <property type="RefSeq nucleotide sequence ID" value="NM_001958.5"/>
    <property type="RefSeq protein sequence ID" value="NP_001949.1"/>
</dbReference>
<dbReference type="UCSC" id="uc002yfe.3">
    <property type="organism name" value="human"/>
</dbReference>
<dbReference type="AGR" id="HGNC:3192"/>
<dbReference type="CTD" id="1917"/>
<dbReference type="DisGeNET" id="1917"/>
<dbReference type="GeneCards" id="EEF1A2"/>
<dbReference type="HGNC" id="HGNC:3192">
    <property type="gene designation" value="EEF1A2"/>
</dbReference>
<dbReference type="HPA" id="ENSG00000101210">
    <property type="expression patterns" value="Tissue enriched (skeletal)"/>
</dbReference>
<dbReference type="MalaCards" id="EEF1A2"/>
<dbReference type="MIM" id="602959">
    <property type="type" value="gene"/>
</dbReference>
<dbReference type="MIM" id="616393">
    <property type="type" value="phenotype"/>
</dbReference>
<dbReference type="MIM" id="616409">
    <property type="type" value="phenotype"/>
</dbReference>
<dbReference type="neXtProt" id="NX_Q05639"/>
<dbReference type="OpenTargets" id="ENSG00000101210"/>
<dbReference type="Orphanet" id="178469">
    <property type="disease" value="Autosomal dominant non-syndromic intellectual disability"/>
</dbReference>
<dbReference type="Orphanet" id="442835">
    <property type="disease" value="Non-specific early-onset epileptic encephalopathy"/>
</dbReference>
<dbReference type="PharmGKB" id="PA36219"/>
<dbReference type="VEuPathDB" id="HostDB:ENSG00000101210"/>
<dbReference type="eggNOG" id="KOG0052">
    <property type="taxonomic scope" value="Eukaryota"/>
</dbReference>
<dbReference type="GeneTree" id="ENSGT00950000183029"/>
<dbReference type="HOGENOM" id="CLU_007265_3_5_1"/>
<dbReference type="InParanoid" id="Q05639"/>
<dbReference type="OMA" id="KLCLHFE"/>
<dbReference type="OrthoDB" id="342024at2759"/>
<dbReference type="PAN-GO" id="Q05639">
    <property type="GO annotations" value="4 GO annotations based on evolutionary models"/>
</dbReference>
<dbReference type="PhylomeDB" id="Q05639"/>
<dbReference type="TreeFam" id="TF300304"/>
<dbReference type="PathwayCommons" id="Q05639"/>
<dbReference type="Reactome" id="R-HSA-156842">
    <property type="pathway name" value="Eukaryotic Translation Elongation"/>
</dbReference>
<dbReference type="SignaLink" id="Q05639"/>
<dbReference type="SIGNOR" id="Q05639"/>
<dbReference type="BioGRID-ORCS" id="1917">
    <property type="hits" value="20 hits in 1160 CRISPR screens"/>
</dbReference>
<dbReference type="CD-CODE" id="91857CE7">
    <property type="entry name" value="Nucleolus"/>
</dbReference>
<dbReference type="CD-CODE" id="FB4E32DD">
    <property type="entry name" value="Presynaptic clusters and postsynaptic densities"/>
</dbReference>
<dbReference type="ChiTaRS" id="EEF1A2">
    <property type="organism name" value="human"/>
</dbReference>
<dbReference type="EvolutionaryTrace" id="Q05639"/>
<dbReference type="GeneWiki" id="EEF1A2"/>
<dbReference type="GenomeRNAi" id="1917"/>
<dbReference type="Pharos" id="Q05639">
    <property type="development level" value="Tchem"/>
</dbReference>
<dbReference type="PRO" id="PR:Q05639"/>
<dbReference type="Proteomes" id="UP000005640">
    <property type="component" value="Chromosome 20"/>
</dbReference>
<dbReference type="RNAct" id="Q05639">
    <property type="molecule type" value="protein"/>
</dbReference>
<dbReference type="Bgee" id="ENSG00000101210">
    <property type="expression patterns" value="Expressed in gastrocnemius and 169 other cell types or tissues"/>
</dbReference>
<dbReference type="ExpressionAtlas" id="Q05639">
    <property type="expression patterns" value="baseline and differential"/>
</dbReference>
<dbReference type="GO" id="GO:0005737">
    <property type="term" value="C:cytoplasm"/>
    <property type="evidence" value="ECO:0000314"/>
    <property type="project" value="UniProtKB"/>
</dbReference>
<dbReference type="GO" id="GO:0098574">
    <property type="term" value="C:cytoplasmic side of lysosomal membrane"/>
    <property type="evidence" value="ECO:0000303"/>
    <property type="project" value="ParkinsonsUK-UCL"/>
</dbReference>
<dbReference type="GO" id="GO:0005789">
    <property type="term" value="C:endoplasmic reticulum membrane"/>
    <property type="evidence" value="ECO:0000314"/>
    <property type="project" value="UniProtKB"/>
</dbReference>
<dbReference type="GO" id="GO:0005853">
    <property type="term" value="C:eukaryotic translation elongation factor 1 complex"/>
    <property type="evidence" value="ECO:0007669"/>
    <property type="project" value="Ensembl"/>
</dbReference>
<dbReference type="GO" id="GO:0045202">
    <property type="term" value="C:synapse"/>
    <property type="evidence" value="ECO:0007669"/>
    <property type="project" value="Ensembl"/>
</dbReference>
<dbReference type="GO" id="GO:0005525">
    <property type="term" value="F:GTP binding"/>
    <property type="evidence" value="ECO:0007669"/>
    <property type="project" value="UniProtKB-KW"/>
</dbReference>
<dbReference type="GO" id="GO:0003924">
    <property type="term" value="F:GTPase activity"/>
    <property type="evidence" value="ECO:0000250"/>
    <property type="project" value="UniProtKB"/>
</dbReference>
<dbReference type="GO" id="GO:0019901">
    <property type="term" value="F:protein kinase binding"/>
    <property type="evidence" value="ECO:0000353"/>
    <property type="project" value="UniProtKB"/>
</dbReference>
<dbReference type="GO" id="GO:0003746">
    <property type="term" value="F:translation elongation factor activity"/>
    <property type="evidence" value="ECO:0000250"/>
    <property type="project" value="UniProtKB"/>
</dbReference>
<dbReference type="GO" id="GO:0008135">
    <property type="term" value="F:translation factor activity, RNA binding"/>
    <property type="evidence" value="ECO:0000303"/>
    <property type="project" value="ProtInc"/>
</dbReference>
<dbReference type="GO" id="GO:0043065">
    <property type="term" value="P:positive regulation of apoptotic process"/>
    <property type="evidence" value="ECO:0007669"/>
    <property type="project" value="Ensembl"/>
</dbReference>
<dbReference type="GO" id="GO:0090218">
    <property type="term" value="P:positive regulation of lipid kinase activity"/>
    <property type="evidence" value="ECO:0000314"/>
    <property type="project" value="UniProtKB"/>
</dbReference>
<dbReference type="GO" id="GO:1904714">
    <property type="term" value="P:regulation of chaperone-mediated autophagy"/>
    <property type="evidence" value="ECO:0000303"/>
    <property type="project" value="ParkinsonsUK-UCL"/>
</dbReference>
<dbReference type="GO" id="GO:0006412">
    <property type="term" value="P:translation"/>
    <property type="evidence" value="ECO:0000318"/>
    <property type="project" value="GO_Central"/>
</dbReference>
<dbReference type="GO" id="GO:0006414">
    <property type="term" value="P:translational elongation"/>
    <property type="evidence" value="ECO:0000250"/>
    <property type="project" value="UniProtKB"/>
</dbReference>
<dbReference type="CDD" id="cd01883">
    <property type="entry name" value="EF1_alpha"/>
    <property type="match status" value="1"/>
</dbReference>
<dbReference type="CDD" id="cd03693">
    <property type="entry name" value="EF1_alpha_II"/>
    <property type="match status" value="1"/>
</dbReference>
<dbReference type="CDD" id="cd03705">
    <property type="entry name" value="EF1_alpha_III"/>
    <property type="match status" value="1"/>
</dbReference>
<dbReference type="FunFam" id="2.40.30.10:FF:000005">
    <property type="entry name" value="Elongation factor 1-alpha"/>
    <property type="match status" value="1"/>
</dbReference>
<dbReference type="FunFam" id="3.40.50.300:FF:000090">
    <property type="entry name" value="Elongation factor 1-alpha"/>
    <property type="match status" value="1"/>
</dbReference>
<dbReference type="FunFam" id="2.40.30.10:FF:000168">
    <property type="entry name" value="Elongation factor 1-alpha 2"/>
    <property type="match status" value="1"/>
</dbReference>
<dbReference type="Gene3D" id="3.40.50.300">
    <property type="entry name" value="P-loop containing nucleotide triphosphate hydrolases"/>
    <property type="match status" value="1"/>
</dbReference>
<dbReference type="Gene3D" id="2.40.30.10">
    <property type="entry name" value="Translation factors"/>
    <property type="match status" value="2"/>
</dbReference>
<dbReference type="HAMAP" id="MF_00118_A">
    <property type="entry name" value="EF_Tu_A"/>
    <property type="match status" value="1"/>
</dbReference>
<dbReference type="IDEAL" id="IID00166"/>
<dbReference type="InterPro" id="IPR004161">
    <property type="entry name" value="EFTu-like_2"/>
</dbReference>
<dbReference type="InterPro" id="IPR031157">
    <property type="entry name" value="G_TR_CS"/>
</dbReference>
<dbReference type="InterPro" id="IPR054696">
    <property type="entry name" value="GTP-eEF1A_C"/>
</dbReference>
<dbReference type="InterPro" id="IPR027417">
    <property type="entry name" value="P-loop_NTPase"/>
</dbReference>
<dbReference type="InterPro" id="IPR000795">
    <property type="entry name" value="T_Tr_GTP-bd_dom"/>
</dbReference>
<dbReference type="InterPro" id="IPR050100">
    <property type="entry name" value="TRAFAC_GTPase_members"/>
</dbReference>
<dbReference type="InterPro" id="IPR009000">
    <property type="entry name" value="Transl_B-barrel_sf"/>
</dbReference>
<dbReference type="InterPro" id="IPR009001">
    <property type="entry name" value="Transl_elong_EF1A/Init_IF2_C"/>
</dbReference>
<dbReference type="InterPro" id="IPR004539">
    <property type="entry name" value="Transl_elong_EF1A_euk/arc"/>
</dbReference>
<dbReference type="NCBIfam" id="TIGR00483">
    <property type="entry name" value="EF-1_alpha"/>
    <property type="match status" value="1"/>
</dbReference>
<dbReference type="NCBIfam" id="NF008969">
    <property type="entry name" value="PRK12317.1"/>
    <property type="match status" value="1"/>
</dbReference>
<dbReference type="PANTHER" id="PTHR23115">
    <property type="entry name" value="TRANSLATION FACTOR"/>
    <property type="match status" value="1"/>
</dbReference>
<dbReference type="Pfam" id="PF22594">
    <property type="entry name" value="GTP-eEF1A_C"/>
    <property type="match status" value="1"/>
</dbReference>
<dbReference type="Pfam" id="PF00009">
    <property type="entry name" value="GTP_EFTU"/>
    <property type="match status" value="1"/>
</dbReference>
<dbReference type="Pfam" id="PF03144">
    <property type="entry name" value="GTP_EFTU_D2"/>
    <property type="match status" value="1"/>
</dbReference>
<dbReference type="PRINTS" id="PR00315">
    <property type="entry name" value="ELONGATNFCT"/>
</dbReference>
<dbReference type="SUPFAM" id="SSF50465">
    <property type="entry name" value="EF-Tu/eEF-1alpha/eIF2-gamma C-terminal domain"/>
    <property type="match status" value="1"/>
</dbReference>
<dbReference type="SUPFAM" id="SSF52540">
    <property type="entry name" value="P-loop containing nucleoside triphosphate hydrolases"/>
    <property type="match status" value="1"/>
</dbReference>
<dbReference type="SUPFAM" id="SSF50447">
    <property type="entry name" value="Translation proteins"/>
    <property type="match status" value="1"/>
</dbReference>
<dbReference type="PROSITE" id="PS00301">
    <property type="entry name" value="G_TR_1"/>
    <property type="match status" value="1"/>
</dbReference>
<dbReference type="PROSITE" id="PS51722">
    <property type="entry name" value="G_TR_2"/>
    <property type="match status" value="1"/>
</dbReference>
<evidence type="ECO:0000250" key="1">
    <source>
        <dbReference type="UniProtKB" id="P62631"/>
    </source>
</evidence>
<evidence type="ECO:0000250" key="2">
    <source>
        <dbReference type="UniProtKB" id="P62632"/>
    </source>
</evidence>
<evidence type="ECO:0000250" key="3">
    <source>
        <dbReference type="UniProtKB" id="P68104"/>
    </source>
</evidence>
<evidence type="ECO:0000250" key="4">
    <source>
        <dbReference type="UniProtKB" id="Q71V39"/>
    </source>
</evidence>
<evidence type="ECO:0000255" key="5"/>
<evidence type="ECO:0000256" key="6">
    <source>
        <dbReference type="SAM" id="MobiDB-lite"/>
    </source>
</evidence>
<evidence type="ECO:0000269" key="7">
    <source>
    </source>
</evidence>
<evidence type="ECO:0000269" key="8">
    <source>
    </source>
</evidence>
<evidence type="ECO:0000269" key="9">
    <source>
    </source>
</evidence>
<evidence type="ECO:0000269" key="10">
    <source>
    </source>
</evidence>
<evidence type="ECO:0000269" key="11">
    <source>
    </source>
</evidence>
<evidence type="ECO:0000269" key="12">
    <source>
    </source>
</evidence>
<evidence type="ECO:0000269" key="13">
    <source>
    </source>
</evidence>
<evidence type="ECO:0000269" key="14">
    <source>
    </source>
</evidence>
<evidence type="ECO:0000269" key="15">
    <source>
    </source>
</evidence>
<evidence type="ECO:0000269" key="16">
    <source>
    </source>
</evidence>
<evidence type="ECO:0000303" key="17">
    <source>
    </source>
</evidence>
<evidence type="ECO:0000303" key="18">
    <source>
    </source>
</evidence>
<evidence type="ECO:0000305" key="19"/>
<evidence type="ECO:0000312" key="20">
    <source>
        <dbReference type="HGNC" id="HGNC:3192"/>
    </source>
</evidence>
<evidence type="ECO:0007744" key="21">
    <source>
        <dbReference type="PDB" id="8B6Z"/>
    </source>
</evidence>
<evidence type="ECO:0007744" key="22">
    <source>
    </source>
</evidence>
<evidence type="ECO:0007744" key="23">
    <source>
    </source>
</evidence>
<evidence type="ECO:0007829" key="24">
    <source>
        <dbReference type="PDB" id="8B6Z"/>
    </source>
</evidence>
<feature type="initiator methionine" description="Removed" evidence="1">
    <location>
        <position position="1"/>
    </location>
</feature>
<feature type="chain" id="PRO_0000090891" description="Elongation factor 1-alpha 2">
    <location>
        <begin position="2"/>
        <end position="463"/>
    </location>
</feature>
<feature type="domain" description="tr-type G">
    <location>
        <begin position="5"/>
        <end position="242"/>
    </location>
</feature>
<feature type="region of interest" description="G1" evidence="5">
    <location>
        <begin position="14"/>
        <end position="21"/>
    </location>
</feature>
<feature type="region of interest" description="G2" evidence="5">
    <location>
        <begin position="70"/>
        <end position="74"/>
    </location>
</feature>
<feature type="region of interest" description="G3" evidence="5">
    <location>
        <begin position="91"/>
        <end position="94"/>
    </location>
</feature>
<feature type="region of interest" description="G4" evidence="5">
    <location>
        <begin position="153"/>
        <end position="156"/>
    </location>
</feature>
<feature type="region of interest" description="G5" evidence="5">
    <location>
        <begin position="194"/>
        <end position="196"/>
    </location>
</feature>
<feature type="region of interest" description="Disordered" evidence="6">
    <location>
        <begin position="444"/>
        <end position="463"/>
    </location>
</feature>
<feature type="binding site" evidence="4">
    <location>
        <position position="17"/>
    </location>
    <ligand>
        <name>GTP</name>
        <dbReference type="ChEBI" id="CHEBI:37565"/>
    </ligand>
</feature>
<feature type="binding site" evidence="4">
    <location>
        <position position="17"/>
    </location>
    <ligand>
        <name>Mg(2+)</name>
        <dbReference type="ChEBI" id="CHEBI:18420"/>
    </ligand>
</feature>
<feature type="binding site" evidence="4">
    <location>
        <position position="18"/>
    </location>
    <ligand>
        <name>GTP</name>
        <dbReference type="ChEBI" id="CHEBI:37565"/>
    </ligand>
</feature>
<feature type="binding site" evidence="4">
    <location>
        <position position="19"/>
    </location>
    <ligand>
        <name>GTP</name>
        <dbReference type="ChEBI" id="CHEBI:37565"/>
    </ligand>
</feature>
<feature type="binding site" evidence="4">
    <location>
        <position position="20"/>
    </location>
    <ligand>
        <name>GTP</name>
        <dbReference type="ChEBI" id="CHEBI:37565"/>
    </ligand>
</feature>
<feature type="binding site" evidence="4">
    <location>
        <position position="21"/>
    </location>
    <ligand>
        <name>GTP</name>
        <dbReference type="ChEBI" id="CHEBI:37565"/>
    </ligand>
</feature>
<feature type="binding site" evidence="4">
    <location>
        <position position="22"/>
    </location>
    <ligand>
        <name>GTP</name>
        <dbReference type="ChEBI" id="CHEBI:37565"/>
    </ligand>
</feature>
<feature type="binding site" evidence="4">
    <location>
        <position position="153"/>
    </location>
    <ligand>
        <name>GTP</name>
        <dbReference type="ChEBI" id="CHEBI:37565"/>
    </ligand>
</feature>
<feature type="binding site" evidence="4">
    <location>
        <position position="154"/>
    </location>
    <ligand>
        <name>GTP</name>
        <dbReference type="ChEBI" id="CHEBI:37565"/>
    </ligand>
</feature>
<feature type="binding site" evidence="4">
    <location>
        <position position="156"/>
    </location>
    <ligand>
        <name>GTP</name>
        <dbReference type="ChEBI" id="CHEBI:37565"/>
    </ligand>
</feature>
<feature type="binding site" evidence="4">
    <location>
        <position position="194"/>
    </location>
    <ligand>
        <name>GTP</name>
        <dbReference type="ChEBI" id="CHEBI:37565"/>
    </ligand>
</feature>
<feature type="binding site" evidence="4">
    <location>
        <position position="195"/>
    </location>
    <ligand>
        <name>GTP</name>
        <dbReference type="ChEBI" id="CHEBI:37565"/>
    </ligand>
</feature>
<feature type="binding site" evidence="4">
    <location>
        <position position="196"/>
    </location>
    <ligand>
        <name>GTP</name>
        <dbReference type="ChEBI" id="CHEBI:37565"/>
    </ligand>
</feature>
<feature type="modified residue" description="N,N,N-trimethylglycine" evidence="3">
    <location>
        <position position="2"/>
    </location>
</feature>
<feature type="modified residue" description="N6,N6,N6-trimethyllysine; alternate; by EEF1AKMT4" evidence="13">
    <location>
        <position position="36"/>
    </location>
</feature>
<feature type="modified residue" description="N6,N6-dimethyllysine; alternate; by EEF1AKMT4" evidence="13">
    <location>
        <position position="36"/>
    </location>
</feature>
<feature type="modified residue" description="N6-methyllysine; alternate; by EEF1AKMT4" evidence="13">
    <location>
        <position position="36"/>
    </location>
</feature>
<feature type="modified residue" description="N6,N6,N6-trimethyllysine" evidence="4">
    <location>
        <position position="55"/>
    </location>
</feature>
<feature type="modified residue" description="N6,N6-dimethyllysine" evidence="14 15">
    <location>
        <position position="55"/>
    </location>
</feature>
<feature type="modified residue" description="N6,N6,N6-trimethyllysine" evidence="23">
    <location>
        <position position="79"/>
    </location>
</feature>
<feature type="modified residue" description="Phosphoserine" evidence="4">
    <location>
        <position position="163"/>
    </location>
</feature>
<feature type="modified residue" description="N6,N6,N6-trimethyllysine; alternate; by EEF1AKMT3" evidence="12">
    <location>
        <position position="165"/>
    </location>
</feature>
<feature type="modified residue" description="N6,N6-dimethyllysine; alternate" evidence="23">
    <location>
        <position position="165"/>
    </location>
</feature>
<feature type="modified residue" description="N6-methyllysine; alternate" evidence="23">
    <location>
        <position position="165"/>
    </location>
</feature>
<feature type="modified residue" description="N6-acetyllysine" evidence="22">
    <location>
        <position position="179"/>
    </location>
</feature>
<feature type="modified residue" description="Phosphoserine" evidence="2">
    <location>
        <position position="224"/>
    </location>
</feature>
<feature type="modified residue" description="Phosphothreonine" evidence="4">
    <location>
        <position position="239"/>
    </location>
</feature>
<feature type="modified residue" description="5-glutamyl glycerylphosphorylethanolamine" evidence="4">
    <location>
        <position position="301"/>
    </location>
</feature>
<feature type="modified residue" description="5-glutamyl glycerylphosphorylethanolamine" evidence="4">
    <location>
        <position position="374"/>
    </location>
</feature>
<feature type="modified residue" description="N6-acetyllysine" evidence="22">
    <location>
        <position position="439"/>
    </location>
</feature>
<feature type="sequence variant" id="VAR_069395" description="In DEE33; dbSNP:rs587777162." evidence="8 9">
    <original>G</original>
    <variation>S</variation>
    <location>
        <position position="70"/>
    </location>
</feature>
<feature type="sequence variant" id="VAR_079033" description="Found in a patient with Rett syndrome-like phenotype; uncertain significance; dbSNP:rs2082414178." evidence="11">
    <original>A</original>
    <variation>T</variation>
    <location>
        <position position="92"/>
    </location>
</feature>
<feature type="sequence variant" id="VAR_073807" description="In MRD38; dbSNP:rs786205866." evidence="10">
    <original>E</original>
    <variation>K</variation>
    <location>
        <position position="122"/>
    </location>
</feature>
<feature type="sequence variant" id="VAR_073808" description="In MRD38; dbSNP:rs786205865." evidence="10">
    <original>D</original>
    <variation>H</variation>
    <location>
        <position position="252"/>
    </location>
</feature>
<feature type="mutagenesis site" description="Abolishes EEF1AKMT4-mediated methylation." evidence="13">
    <original>K</original>
    <variation>R</variation>
    <location>
        <position position="36"/>
    </location>
</feature>
<feature type="mutagenesis site" description="Abolishes methylation by EEF1AKMT3." evidence="12">
    <original>K</original>
    <variation>A</variation>
    <location>
        <position position="165"/>
    </location>
</feature>
<feature type="sequence conflict" description="In Ref. 7; AAA91835." evidence="19" ref="7">
    <original>R</original>
    <variation>P</variation>
    <location>
        <position position="427"/>
    </location>
</feature>
<feature type="strand" evidence="24">
    <location>
        <begin position="7"/>
        <end position="13"/>
    </location>
</feature>
<feature type="helix" evidence="24">
    <location>
        <begin position="20"/>
        <end position="31"/>
    </location>
</feature>
<feature type="helix" evidence="24">
    <location>
        <begin position="36"/>
        <end position="49"/>
    </location>
</feature>
<feature type="strand" evidence="24">
    <location>
        <begin position="50"/>
        <end position="52"/>
    </location>
</feature>
<feature type="turn" evidence="24">
    <location>
        <begin position="55"/>
        <end position="57"/>
    </location>
</feature>
<feature type="helix" evidence="24">
    <location>
        <begin position="58"/>
        <end position="65"/>
    </location>
</feature>
<feature type="strand" evidence="24">
    <location>
        <begin position="79"/>
        <end position="81"/>
    </location>
</feature>
<feature type="strand" evidence="24">
    <location>
        <begin position="86"/>
        <end position="91"/>
    </location>
</feature>
<feature type="strand" evidence="24">
    <location>
        <begin position="93"/>
        <end position="95"/>
    </location>
</feature>
<feature type="helix" evidence="24">
    <location>
        <begin position="98"/>
        <end position="104"/>
    </location>
</feature>
<feature type="strand" evidence="24">
    <location>
        <begin position="105"/>
        <end position="107"/>
    </location>
</feature>
<feature type="strand" evidence="24">
    <location>
        <begin position="110"/>
        <end position="117"/>
    </location>
</feature>
<feature type="helix" evidence="24">
    <location>
        <begin position="122"/>
        <end position="126"/>
    </location>
</feature>
<feature type="helix" evidence="24">
    <location>
        <begin position="133"/>
        <end position="143"/>
    </location>
</feature>
<feature type="strand" evidence="24">
    <location>
        <begin position="148"/>
        <end position="153"/>
    </location>
</feature>
<feature type="helix" evidence="24">
    <location>
        <begin position="155"/>
        <end position="157"/>
    </location>
</feature>
<feature type="strand" evidence="24">
    <location>
        <begin position="158"/>
        <end position="162"/>
    </location>
</feature>
<feature type="helix" evidence="24">
    <location>
        <begin position="164"/>
        <end position="181"/>
    </location>
</feature>
<feature type="helix" evidence="24">
    <location>
        <begin position="185"/>
        <end position="187"/>
    </location>
</feature>
<feature type="strand" evidence="24">
    <location>
        <begin position="190"/>
        <end position="192"/>
    </location>
</feature>
<feature type="turn" evidence="24">
    <location>
        <begin position="195"/>
        <end position="200"/>
    </location>
</feature>
<feature type="strand" evidence="24">
    <location>
        <begin position="201"/>
        <end position="203"/>
    </location>
</feature>
<feature type="strand" evidence="24">
    <location>
        <begin position="214"/>
        <end position="216"/>
    </location>
</feature>
<feature type="strand" evidence="24">
    <location>
        <begin position="223"/>
        <end position="227"/>
    </location>
</feature>
<feature type="helix" evidence="24">
    <location>
        <begin position="228"/>
        <end position="233"/>
    </location>
</feature>
<feature type="strand" evidence="24">
    <location>
        <begin position="247"/>
        <end position="249"/>
    </location>
</feature>
<feature type="strand" evidence="24">
    <location>
        <begin position="252"/>
        <end position="256"/>
    </location>
</feature>
<feature type="turn" evidence="24">
    <location>
        <begin position="257"/>
        <end position="259"/>
    </location>
</feature>
<feature type="strand" evidence="24">
    <location>
        <begin position="260"/>
        <end position="266"/>
    </location>
</feature>
<feature type="strand" evidence="24">
    <location>
        <begin position="277"/>
        <end position="281"/>
    </location>
</feature>
<feature type="turn" evidence="24">
    <location>
        <begin position="282"/>
        <end position="284"/>
    </location>
</feature>
<feature type="strand" evidence="24">
    <location>
        <begin position="285"/>
        <end position="294"/>
    </location>
</feature>
<feature type="strand" evidence="24">
    <location>
        <begin position="307"/>
        <end position="314"/>
    </location>
</feature>
<feature type="turn" evidence="24">
    <location>
        <begin position="317"/>
        <end position="319"/>
    </location>
</feature>
<feature type="strand" evidence="24">
    <location>
        <begin position="325"/>
        <end position="328"/>
    </location>
</feature>
<feature type="strand" evidence="24">
    <location>
        <begin position="337"/>
        <end position="346"/>
    </location>
</feature>
<feature type="strand" evidence="24">
    <location>
        <begin position="360"/>
        <end position="363"/>
    </location>
</feature>
<feature type="strand" evidence="24">
    <location>
        <begin position="366"/>
        <end position="379"/>
    </location>
</feature>
<feature type="turn" evidence="24">
    <location>
        <begin position="381"/>
        <end position="383"/>
    </location>
</feature>
<feature type="strand" evidence="24">
    <location>
        <begin position="386"/>
        <end position="390"/>
    </location>
</feature>
<feature type="strand" evidence="24">
    <location>
        <begin position="399"/>
        <end position="408"/>
    </location>
</feature>
<feature type="turn" evidence="24">
    <location>
        <begin position="415"/>
        <end position="417"/>
    </location>
</feature>
<feature type="helix" evidence="24">
    <location>
        <begin position="419"/>
        <end position="421"/>
    </location>
</feature>
<feature type="strand" evidence="24">
    <location>
        <begin position="423"/>
        <end position="428"/>
    </location>
</feature>
<feature type="strand" evidence="24">
    <location>
        <begin position="431"/>
        <end position="443"/>
    </location>
</feature>
<protein>
    <recommendedName>
        <fullName>Elongation factor 1-alpha 2</fullName>
        <shortName>EF-1-alpha-2</shortName>
        <ecNumber evidence="4">3.6.5.-</ecNumber>
    </recommendedName>
    <alternativeName>
        <fullName evidence="18">Eukaryotic elongation factor 1 A-2</fullName>
        <shortName evidence="18">eEF1A-2</shortName>
    </alternativeName>
    <alternativeName>
        <fullName>Statin-S1</fullName>
    </alternativeName>
</protein>
<comment type="function">
    <text evidence="3 4">Translation elongation factor that catalyzes the GTP-dependent binding of aminoacyl-tRNA (aa-tRNA) to the A-site of ribosomes during the elongation phase of protein synthesis. Base pairing between the mRNA codon and the aa-tRNA anticodon promotes GTP hydrolysis, releasing the aa-tRNA from EEF1A1 and allowing its accommodation into the ribosome (By similarity). The growing protein chain is subsequently transferred from the P-site peptidyl tRNA to the A-site aa-tRNA, extending it by one amino acid through ribosome-catalyzed peptide bond formation (By similarity).</text>
</comment>
<comment type="catalytic activity">
    <reaction evidence="4">
        <text>GTP + H2O = GDP + phosphate + H(+)</text>
        <dbReference type="Rhea" id="RHEA:19669"/>
        <dbReference type="ChEBI" id="CHEBI:15377"/>
        <dbReference type="ChEBI" id="CHEBI:15378"/>
        <dbReference type="ChEBI" id="CHEBI:37565"/>
        <dbReference type="ChEBI" id="CHEBI:43474"/>
        <dbReference type="ChEBI" id="CHEBI:58189"/>
    </reaction>
    <physiologicalReaction direction="left-to-right" evidence="4">
        <dbReference type="Rhea" id="RHEA:19670"/>
    </physiologicalReaction>
</comment>
<comment type="activity regulation">
    <text evidence="7">Inhibited by narciclasine.</text>
</comment>
<comment type="subunit">
    <text evidence="4">Homodimer; arranged in a 'head to tail' dimer configuration.</text>
</comment>
<comment type="interaction">
    <interactant intactId="EBI-354943">
        <id>Q05639</id>
    </interactant>
    <interactant intactId="EBI-7223971">
        <id>Q969K4</id>
        <label>ABTB1</label>
    </interactant>
    <organismsDiffer>false</organismsDiffer>
    <experiments>11</experiments>
</comment>
<comment type="interaction">
    <interactant intactId="EBI-354943">
        <id>Q05639</id>
    </interactant>
    <interactant intactId="EBI-466029">
        <id>P42858</id>
        <label>HTT</label>
    </interactant>
    <organismsDiffer>false</organismsDiffer>
    <experiments>3</experiments>
</comment>
<comment type="interaction">
    <interactant intactId="EBI-354943">
        <id>Q05639</id>
    </interactant>
    <interactant intactId="EBI-5323863">
        <id>Q5S007</id>
        <label>LRRK2</label>
    </interactant>
    <organismsDiffer>false</organismsDiffer>
    <experiments>3</experiments>
</comment>
<comment type="interaction">
    <interactant intactId="EBI-354943">
        <id>Q05639</id>
    </interactant>
    <interactant intactId="EBI-12002412">
        <id>Q86YT5</id>
        <label>SLC13A5</label>
    </interactant>
    <organismsDiffer>false</organismsDiffer>
    <experiments>2</experiments>
</comment>
<comment type="interaction">
    <interactant intactId="EBI-354943">
        <id>Q05639</id>
    </interactant>
    <interactant intactId="EBI-2854712">
        <id>Q9NSC7</id>
        <label>ST6GALNAC1</label>
    </interactant>
    <organismsDiffer>false</organismsDiffer>
    <experiments>2</experiments>
</comment>
<comment type="interaction">
    <interactant intactId="EBI-354943">
        <id>Q05639</id>
    </interactant>
    <interactant intactId="EBI-9050853">
        <id>P24557</id>
        <label>TBXAS1</label>
    </interactant>
    <organismsDiffer>false</organismsDiffer>
    <experiments>2</experiments>
</comment>
<comment type="interaction">
    <interactant intactId="EBI-354943">
        <id>Q05639</id>
    </interactant>
    <interactant intactId="EBI-923010">
        <id>Q14166</id>
        <label>TTLL12</label>
    </interactant>
    <organismsDiffer>false</organismsDiffer>
    <experiments>6</experiments>
</comment>
<comment type="interaction">
    <interactant intactId="EBI-354943">
        <id>Q05639</id>
    </interactant>
    <interactant intactId="EBI-7602718">
        <id>P59595</id>
        <label>N</label>
    </interactant>
    <organismsDiffer>true</organismsDiffer>
    <experiments>10</experiments>
</comment>
<comment type="subcellular location">
    <subcellularLocation>
        <location evidence="16">Endoplasmic reticulum membrane</location>
    </subcellularLocation>
</comment>
<comment type="tissue specificity">
    <text>Brain, heart, and skeletal muscle.</text>
</comment>
<comment type="PTM">
    <text evidence="12 13 14 15">Trimethylated at Lys-165 by EEF1AKMT3 (PubMed:28108655). Mono-, di-, and trimethylated at Lys-36 by EEF1AKMT4; trimethylated form is predominant. Methylation by EEF1AKMT4 contributes to the fine-tuning of translation rates for a subset of tRNAs (PubMed:28520920). Trimethylated at the N-terminus by METTL13 (PubMed:30143613). Mono- and dimethylated at Lys-55 by METTL13; dimethylated form is predominant (PubMed:30143613, PubMed:30612740).</text>
</comment>
<comment type="disease" evidence="8 9">
    <disease id="DI-04447">
        <name>Developmental and epileptic encephalopathy 33</name>
        <acronym>DEE33</acronym>
        <description>A form of epileptic encephalopathy, a heterogeneous group of severe early-onset epilepsies characterized by refractory seizures, neurodevelopmental impairment, and poor prognosis. Development is normal prior to seizure onset, after which cognitive and motor delays become apparent.</description>
        <dbReference type="MIM" id="616409"/>
    </disease>
    <text>The disease is caused by variants affecting the gene represented in this entry.</text>
</comment>
<comment type="disease" evidence="10">
    <disease id="DI-04443">
        <name>Intellectual developmental disorder, autosomal dominant 38</name>
        <acronym>MRD38</acronym>
        <description>A disorder characterized by significantly below average general intellectual functioning associated with impairments in adaptive behavior and manifested during the developmental period. MRD38 common features are severe intellectual disability, autistic behavior, absent speech, neonatal hypotonia, epilepsy and progressive microcephaly.</description>
        <dbReference type="MIM" id="616393"/>
    </disease>
    <text>The disease is caused by variants affecting the gene represented in this entry.</text>
</comment>
<comment type="similarity">
    <text evidence="19">Belongs to the TRAFAC class translation factor GTPase superfamily. Classic translation factor GTPase family. EF-Tu/EF-1A subfamily.</text>
</comment>
<comment type="online information" name="Atlas of Genetics and Cytogenetics in Oncology and Haematology">
    <link uri="https://atlasgeneticsoncology.org/gene/40408/EEF1A2"/>
</comment>
<keyword id="KW-0002">3D-structure</keyword>
<keyword id="KW-0007">Acetylation</keyword>
<keyword id="KW-1268">Autism spectrum disorder</keyword>
<keyword id="KW-0225">Disease variant</keyword>
<keyword id="KW-0251">Elongation factor</keyword>
<keyword id="KW-0256">Endoplasmic reticulum</keyword>
<keyword id="KW-0887">Epilepsy</keyword>
<keyword id="KW-0342">GTP-binding</keyword>
<keyword id="KW-0378">Hydrolase</keyword>
<keyword id="KW-0991">Intellectual disability</keyword>
<keyword id="KW-0460">Magnesium</keyword>
<keyword id="KW-0472">Membrane</keyword>
<keyword id="KW-0479">Metal-binding</keyword>
<keyword id="KW-0488">Methylation</keyword>
<keyword id="KW-0547">Nucleotide-binding</keyword>
<keyword id="KW-0597">Phosphoprotein</keyword>
<keyword id="KW-0648">Protein biosynthesis</keyword>
<keyword id="KW-1267">Proteomics identification</keyword>
<keyword id="KW-1185">Reference proteome</keyword>
<accession>Q05639</accession>
<accession>B5BUF3</accession>
<accession>E1P5J1</accession>
<accession>P54266</accession>
<accession>Q0VGC7</accession>